<evidence type="ECO:0000255" key="1">
    <source>
        <dbReference type="HAMAP-Rule" id="MF_00315"/>
    </source>
</evidence>
<comment type="function">
    <text evidence="1">Catalyzes the acyloin condensation reaction between C atoms 2 and 3 of pyruvate and glyceraldehyde 3-phosphate to yield 1-deoxy-D-xylulose-5-phosphate (DXP).</text>
</comment>
<comment type="catalytic activity">
    <reaction evidence="1">
        <text>D-glyceraldehyde 3-phosphate + pyruvate + H(+) = 1-deoxy-D-xylulose 5-phosphate + CO2</text>
        <dbReference type="Rhea" id="RHEA:12605"/>
        <dbReference type="ChEBI" id="CHEBI:15361"/>
        <dbReference type="ChEBI" id="CHEBI:15378"/>
        <dbReference type="ChEBI" id="CHEBI:16526"/>
        <dbReference type="ChEBI" id="CHEBI:57792"/>
        <dbReference type="ChEBI" id="CHEBI:59776"/>
        <dbReference type="EC" id="2.2.1.7"/>
    </reaction>
</comment>
<comment type="cofactor">
    <cofactor evidence="1">
        <name>Mg(2+)</name>
        <dbReference type="ChEBI" id="CHEBI:18420"/>
    </cofactor>
    <text evidence="1">Binds 1 Mg(2+) ion per subunit.</text>
</comment>
<comment type="cofactor">
    <cofactor evidence="1">
        <name>thiamine diphosphate</name>
        <dbReference type="ChEBI" id="CHEBI:58937"/>
    </cofactor>
    <text evidence="1">Binds 1 thiamine pyrophosphate per subunit.</text>
</comment>
<comment type="pathway">
    <text evidence="1">Metabolic intermediate biosynthesis; 1-deoxy-D-xylulose 5-phosphate biosynthesis; 1-deoxy-D-xylulose 5-phosphate from D-glyceraldehyde 3-phosphate and pyruvate: step 1/1.</text>
</comment>
<comment type="subunit">
    <text evidence="1">Homodimer.</text>
</comment>
<comment type="similarity">
    <text evidence="1">Belongs to the transketolase family. DXPS subfamily.</text>
</comment>
<organism>
    <name type="scientific">Rippkaea orientalis (strain PCC 8801 / RF-1)</name>
    <name type="common">Cyanothece sp. (strain PCC 8801)</name>
    <dbReference type="NCBI Taxonomy" id="41431"/>
    <lineage>
        <taxon>Bacteria</taxon>
        <taxon>Bacillati</taxon>
        <taxon>Cyanobacteriota</taxon>
        <taxon>Cyanophyceae</taxon>
        <taxon>Oscillatoriophycideae</taxon>
        <taxon>Chroococcales</taxon>
        <taxon>Aphanothecaceae</taxon>
        <taxon>Rippkaea</taxon>
        <taxon>Rippkaea orientalis</taxon>
    </lineage>
</organism>
<feature type="chain" id="PRO_1000119542" description="1-deoxy-D-xylulose-5-phosphate synthase">
    <location>
        <begin position="1"/>
        <end position="636"/>
    </location>
</feature>
<feature type="binding site" evidence="1">
    <location>
        <position position="72"/>
    </location>
    <ligand>
        <name>thiamine diphosphate</name>
        <dbReference type="ChEBI" id="CHEBI:58937"/>
    </ligand>
</feature>
<feature type="binding site" evidence="1">
    <location>
        <begin position="113"/>
        <end position="115"/>
    </location>
    <ligand>
        <name>thiamine diphosphate</name>
        <dbReference type="ChEBI" id="CHEBI:58937"/>
    </ligand>
</feature>
<feature type="binding site" evidence="1">
    <location>
        <position position="144"/>
    </location>
    <ligand>
        <name>Mg(2+)</name>
        <dbReference type="ChEBI" id="CHEBI:18420"/>
    </ligand>
</feature>
<feature type="binding site" evidence="1">
    <location>
        <begin position="145"/>
        <end position="146"/>
    </location>
    <ligand>
        <name>thiamine diphosphate</name>
        <dbReference type="ChEBI" id="CHEBI:58937"/>
    </ligand>
</feature>
<feature type="binding site" evidence="1">
    <location>
        <position position="174"/>
    </location>
    <ligand>
        <name>Mg(2+)</name>
        <dbReference type="ChEBI" id="CHEBI:18420"/>
    </ligand>
</feature>
<feature type="binding site" evidence="1">
    <location>
        <position position="174"/>
    </location>
    <ligand>
        <name>thiamine diphosphate</name>
        <dbReference type="ChEBI" id="CHEBI:58937"/>
    </ligand>
</feature>
<feature type="binding site" evidence="1">
    <location>
        <position position="287"/>
    </location>
    <ligand>
        <name>thiamine diphosphate</name>
        <dbReference type="ChEBI" id="CHEBI:58937"/>
    </ligand>
</feature>
<feature type="binding site" evidence="1">
    <location>
        <position position="370"/>
    </location>
    <ligand>
        <name>thiamine diphosphate</name>
        <dbReference type="ChEBI" id="CHEBI:58937"/>
    </ligand>
</feature>
<gene>
    <name evidence="1" type="primary">dxs</name>
    <name type="ordered locus">PCC8801_0471</name>
</gene>
<dbReference type="EC" id="2.2.1.7" evidence="1"/>
<dbReference type="EMBL" id="CP001287">
    <property type="protein sequence ID" value="ACK64567.1"/>
    <property type="molecule type" value="Genomic_DNA"/>
</dbReference>
<dbReference type="RefSeq" id="WP_012593844.1">
    <property type="nucleotide sequence ID" value="NC_011726.1"/>
</dbReference>
<dbReference type="SMR" id="B7JVJ6"/>
<dbReference type="STRING" id="41431.PCC8801_0471"/>
<dbReference type="KEGG" id="cyp:PCC8801_0471"/>
<dbReference type="eggNOG" id="COG1154">
    <property type="taxonomic scope" value="Bacteria"/>
</dbReference>
<dbReference type="HOGENOM" id="CLU_009227_1_4_3"/>
<dbReference type="OrthoDB" id="9803371at2"/>
<dbReference type="UniPathway" id="UPA00064">
    <property type="reaction ID" value="UER00091"/>
</dbReference>
<dbReference type="Proteomes" id="UP000008204">
    <property type="component" value="Chromosome"/>
</dbReference>
<dbReference type="GO" id="GO:0005829">
    <property type="term" value="C:cytosol"/>
    <property type="evidence" value="ECO:0007669"/>
    <property type="project" value="TreeGrafter"/>
</dbReference>
<dbReference type="GO" id="GO:0008661">
    <property type="term" value="F:1-deoxy-D-xylulose-5-phosphate synthase activity"/>
    <property type="evidence" value="ECO:0007669"/>
    <property type="project" value="UniProtKB-UniRule"/>
</dbReference>
<dbReference type="GO" id="GO:0000287">
    <property type="term" value="F:magnesium ion binding"/>
    <property type="evidence" value="ECO:0007669"/>
    <property type="project" value="UniProtKB-UniRule"/>
</dbReference>
<dbReference type="GO" id="GO:0030976">
    <property type="term" value="F:thiamine pyrophosphate binding"/>
    <property type="evidence" value="ECO:0007669"/>
    <property type="project" value="UniProtKB-UniRule"/>
</dbReference>
<dbReference type="GO" id="GO:0052865">
    <property type="term" value="P:1-deoxy-D-xylulose 5-phosphate biosynthetic process"/>
    <property type="evidence" value="ECO:0007669"/>
    <property type="project" value="UniProtKB-UniPathway"/>
</dbReference>
<dbReference type="GO" id="GO:0019288">
    <property type="term" value="P:isopentenyl diphosphate biosynthetic process, methylerythritol 4-phosphate pathway"/>
    <property type="evidence" value="ECO:0007669"/>
    <property type="project" value="TreeGrafter"/>
</dbReference>
<dbReference type="GO" id="GO:0016114">
    <property type="term" value="P:terpenoid biosynthetic process"/>
    <property type="evidence" value="ECO:0007669"/>
    <property type="project" value="UniProtKB-UniRule"/>
</dbReference>
<dbReference type="GO" id="GO:0009228">
    <property type="term" value="P:thiamine biosynthetic process"/>
    <property type="evidence" value="ECO:0007669"/>
    <property type="project" value="UniProtKB-UniRule"/>
</dbReference>
<dbReference type="CDD" id="cd02007">
    <property type="entry name" value="TPP_DXS"/>
    <property type="match status" value="1"/>
</dbReference>
<dbReference type="CDD" id="cd07033">
    <property type="entry name" value="TPP_PYR_DXS_TK_like"/>
    <property type="match status" value="1"/>
</dbReference>
<dbReference type="FunFam" id="3.40.50.920:FF:000002">
    <property type="entry name" value="1-deoxy-D-xylulose-5-phosphate synthase"/>
    <property type="match status" value="1"/>
</dbReference>
<dbReference type="FunFam" id="3.40.50.970:FF:000005">
    <property type="entry name" value="1-deoxy-D-xylulose-5-phosphate synthase"/>
    <property type="match status" value="1"/>
</dbReference>
<dbReference type="Gene3D" id="3.40.50.920">
    <property type="match status" value="1"/>
</dbReference>
<dbReference type="Gene3D" id="3.40.50.970">
    <property type="match status" value="2"/>
</dbReference>
<dbReference type="HAMAP" id="MF_00315">
    <property type="entry name" value="DXP_synth"/>
    <property type="match status" value="1"/>
</dbReference>
<dbReference type="InterPro" id="IPR005477">
    <property type="entry name" value="Dxylulose-5-P_synthase"/>
</dbReference>
<dbReference type="InterPro" id="IPR029061">
    <property type="entry name" value="THDP-binding"/>
</dbReference>
<dbReference type="InterPro" id="IPR009014">
    <property type="entry name" value="Transketo_C/PFOR_II"/>
</dbReference>
<dbReference type="InterPro" id="IPR005475">
    <property type="entry name" value="Transketolase-like_Pyr-bd"/>
</dbReference>
<dbReference type="InterPro" id="IPR020826">
    <property type="entry name" value="Transketolase_BS"/>
</dbReference>
<dbReference type="InterPro" id="IPR033248">
    <property type="entry name" value="Transketolase_C"/>
</dbReference>
<dbReference type="InterPro" id="IPR049557">
    <property type="entry name" value="Transketolase_CS"/>
</dbReference>
<dbReference type="NCBIfam" id="TIGR00204">
    <property type="entry name" value="dxs"/>
    <property type="match status" value="1"/>
</dbReference>
<dbReference type="NCBIfam" id="NF003933">
    <property type="entry name" value="PRK05444.2-2"/>
    <property type="match status" value="1"/>
</dbReference>
<dbReference type="PANTHER" id="PTHR43322">
    <property type="entry name" value="1-D-DEOXYXYLULOSE 5-PHOSPHATE SYNTHASE-RELATED"/>
    <property type="match status" value="1"/>
</dbReference>
<dbReference type="PANTHER" id="PTHR43322:SF5">
    <property type="entry name" value="1-DEOXY-D-XYLULOSE-5-PHOSPHATE SYNTHASE, CHLOROPLASTIC"/>
    <property type="match status" value="1"/>
</dbReference>
<dbReference type="Pfam" id="PF13292">
    <property type="entry name" value="DXP_synthase_N"/>
    <property type="match status" value="1"/>
</dbReference>
<dbReference type="Pfam" id="PF02779">
    <property type="entry name" value="Transket_pyr"/>
    <property type="match status" value="1"/>
</dbReference>
<dbReference type="Pfam" id="PF02780">
    <property type="entry name" value="Transketolase_C"/>
    <property type="match status" value="1"/>
</dbReference>
<dbReference type="SMART" id="SM00861">
    <property type="entry name" value="Transket_pyr"/>
    <property type="match status" value="1"/>
</dbReference>
<dbReference type="SUPFAM" id="SSF52518">
    <property type="entry name" value="Thiamin diphosphate-binding fold (THDP-binding)"/>
    <property type="match status" value="2"/>
</dbReference>
<dbReference type="SUPFAM" id="SSF52922">
    <property type="entry name" value="TK C-terminal domain-like"/>
    <property type="match status" value="1"/>
</dbReference>
<dbReference type="PROSITE" id="PS00801">
    <property type="entry name" value="TRANSKETOLASE_1"/>
    <property type="match status" value="1"/>
</dbReference>
<dbReference type="PROSITE" id="PS00802">
    <property type="entry name" value="TRANSKETOLASE_2"/>
    <property type="match status" value="1"/>
</dbReference>
<reference key="1">
    <citation type="journal article" date="2011" name="MBio">
        <title>Novel metabolic attributes of the genus Cyanothece, comprising a group of unicellular nitrogen-fixing Cyanobacteria.</title>
        <authorList>
            <person name="Bandyopadhyay A."/>
            <person name="Elvitigala T."/>
            <person name="Welsh E."/>
            <person name="Stockel J."/>
            <person name="Liberton M."/>
            <person name="Min H."/>
            <person name="Sherman L.A."/>
            <person name="Pakrasi H.B."/>
        </authorList>
    </citation>
    <scope>NUCLEOTIDE SEQUENCE [LARGE SCALE GENOMIC DNA]</scope>
    <source>
        <strain>PCC 8801 / RF-1</strain>
    </source>
</reference>
<proteinExistence type="inferred from homology"/>
<protein>
    <recommendedName>
        <fullName evidence="1">1-deoxy-D-xylulose-5-phosphate synthase</fullName>
        <ecNumber evidence="1">2.2.1.7</ecNumber>
    </recommendedName>
    <alternativeName>
        <fullName evidence="1">1-deoxyxylulose-5-phosphate synthase</fullName>
        <shortName evidence="1">DXP synthase</shortName>
        <shortName evidence="1">DXPS</shortName>
    </alternativeName>
</protein>
<accession>B7JVJ6</accession>
<sequence length="636" mass="69101">MHISDITHPNQLHGLSIRQLEDVARQIREKHLQTIAATGGHLGPGLGVVELTIALYQTLDLDRDKVTWDVGHQAYPHKMLTGRYKNFHTLRQKDGIAGYLKRCESKFDHFGAGHASTSISAALGMALARDAQGEDYKVVAVIGDGALTGGMALEAINHAGHLPHTNLMVVLNDNEMSISPNVGAISRYLNKVRLSDPVQFLADNLEEQFKHLPFFGDSLSPEMERVKEGMKRLAVSKVGAVIEELGFKYFGPIDGHNLQELISTFKQAHKVTGPVLVHVATVKGKGYELAEKDQVGYHAQSPFNLATGKAIPSSKPKPPSYAKVFAHTLTTLAENNPKIIGITAAMATGTGLDKLQAKLPKQYIDVGIAEQHAVTLAGGLACEGMRPVVAIYSTFLQRAYDQVLHDVCIQNLPVFFCMDRAGIVGADGPTHQGMYDIAYLRCIPNMTIMAPKDEAELQRMIVTGVNYTDGPIAMRYPRGNGIGVPLMEEGWEPLPIGKGEILRNGDDLLILGYGTMVNTALQAAETLREHGIEATVVNARFVKPLDTELILPLAQRIGKVVTLEEGCLMGGFGSAVAEAFSDHNVLVPLKRFGVPDRLVDHATPDQSKADLGLTSPQIAEQILQVFFSNRQPSMVS</sequence>
<keyword id="KW-0414">Isoprene biosynthesis</keyword>
<keyword id="KW-0460">Magnesium</keyword>
<keyword id="KW-0479">Metal-binding</keyword>
<keyword id="KW-1185">Reference proteome</keyword>
<keyword id="KW-0784">Thiamine biosynthesis</keyword>
<keyword id="KW-0786">Thiamine pyrophosphate</keyword>
<keyword id="KW-0808">Transferase</keyword>
<name>DXS_RIPO1</name>